<gene>
    <name evidence="1" type="primary">yceI</name>
    <name type="ordered locus">SPAB_02374</name>
</gene>
<dbReference type="EMBL" id="CP000886">
    <property type="protein sequence ID" value="ABX67756.1"/>
    <property type="molecule type" value="Genomic_DNA"/>
</dbReference>
<dbReference type="RefSeq" id="WP_000739886.1">
    <property type="nucleotide sequence ID" value="NC_010102.1"/>
</dbReference>
<dbReference type="SMR" id="A9N5Q6"/>
<dbReference type="KEGG" id="spq:SPAB_02374"/>
<dbReference type="PATRIC" id="fig|1016998.12.peg.2246"/>
<dbReference type="HOGENOM" id="CLU_071003_1_2_6"/>
<dbReference type="BioCyc" id="SENT1016998:SPAB_RS09670-MONOMER"/>
<dbReference type="Proteomes" id="UP000008556">
    <property type="component" value="Chromosome"/>
</dbReference>
<dbReference type="GO" id="GO:0042597">
    <property type="term" value="C:periplasmic space"/>
    <property type="evidence" value="ECO:0007669"/>
    <property type="project" value="UniProtKB-SubCell"/>
</dbReference>
<dbReference type="Gene3D" id="2.40.128.110">
    <property type="entry name" value="Lipid/polyisoprenoid-binding, YceI-like"/>
    <property type="match status" value="1"/>
</dbReference>
<dbReference type="HAMAP" id="MF_00780">
    <property type="entry name" value="UPF0312"/>
    <property type="match status" value="1"/>
</dbReference>
<dbReference type="InterPro" id="IPR007372">
    <property type="entry name" value="Lipid/polyisoprenoid-bd_YceI"/>
</dbReference>
<dbReference type="InterPro" id="IPR036761">
    <property type="entry name" value="TTHA0802/YceI-like_sf"/>
</dbReference>
<dbReference type="InterPro" id="IPR023480">
    <property type="entry name" value="UPF0312/YceI"/>
</dbReference>
<dbReference type="NCBIfam" id="NF002994">
    <property type="entry name" value="PRK03757.1"/>
    <property type="match status" value="1"/>
</dbReference>
<dbReference type="PANTHER" id="PTHR34406">
    <property type="entry name" value="PROTEIN YCEI"/>
    <property type="match status" value="1"/>
</dbReference>
<dbReference type="PANTHER" id="PTHR34406:SF1">
    <property type="entry name" value="PROTEIN YCEI"/>
    <property type="match status" value="1"/>
</dbReference>
<dbReference type="Pfam" id="PF04264">
    <property type="entry name" value="YceI"/>
    <property type="match status" value="1"/>
</dbReference>
<dbReference type="SMART" id="SM00867">
    <property type="entry name" value="YceI"/>
    <property type="match status" value="1"/>
</dbReference>
<dbReference type="SUPFAM" id="SSF101874">
    <property type="entry name" value="YceI-like"/>
    <property type="match status" value="1"/>
</dbReference>
<comment type="subcellular location">
    <subcellularLocation>
        <location evidence="1">Periplasm</location>
    </subcellularLocation>
</comment>
<comment type="similarity">
    <text evidence="1">Belongs to the UPF0312 family. Type 1 subfamily.</text>
</comment>
<reference key="1">
    <citation type="submission" date="2007-11" db="EMBL/GenBank/DDBJ databases">
        <authorList>
            <consortium name="The Salmonella enterica serovar Paratyphi B Genome Sequencing Project"/>
            <person name="McClelland M."/>
            <person name="Sanderson E.K."/>
            <person name="Porwollik S."/>
            <person name="Spieth J."/>
            <person name="Clifton W.S."/>
            <person name="Fulton R."/>
            <person name="Cordes M."/>
            <person name="Wollam A."/>
            <person name="Shah N."/>
            <person name="Pepin K."/>
            <person name="Bhonagiri V."/>
            <person name="Nash W."/>
            <person name="Johnson M."/>
            <person name="Thiruvilangam P."/>
            <person name="Wilson R."/>
        </authorList>
    </citation>
    <scope>NUCLEOTIDE SEQUENCE [LARGE SCALE GENOMIC DNA]</scope>
    <source>
        <strain>ATCC BAA-1250 / SPB7</strain>
    </source>
</reference>
<organism>
    <name type="scientific">Salmonella paratyphi B (strain ATCC BAA-1250 / SPB7)</name>
    <dbReference type="NCBI Taxonomy" id="1016998"/>
    <lineage>
        <taxon>Bacteria</taxon>
        <taxon>Pseudomonadati</taxon>
        <taxon>Pseudomonadota</taxon>
        <taxon>Gammaproteobacteria</taxon>
        <taxon>Enterobacterales</taxon>
        <taxon>Enterobacteriaceae</taxon>
        <taxon>Salmonella</taxon>
    </lineage>
</organism>
<evidence type="ECO:0000255" key="1">
    <source>
        <dbReference type="HAMAP-Rule" id="MF_00780"/>
    </source>
</evidence>
<keyword id="KW-0574">Periplasm</keyword>
<keyword id="KW-0732">Signal</keyword>
<accession>A9N5Q6</accession>
<proteinExistence type="inferred from homology"/>
<sequence length="191" mass="21023">MKKNLLGFTLASLLFTTGSAVAAEYKIDKEGQHAFVNFRIQHLGYSWLYGTFKDFDGTFTFDEKNPSADKVNVTINTNSVDTNHAERDKHLRSAEFLNVAKFPQATFTSTSVKKEGDELDITGNLTLNGVTKPVTLEAKLMGQGDDPWGGKRAGFEAEGKIKLKDFNITTDLGPASQEVELIISVEGVQQK</sequence>
<name>YCEI_SALPB</name>
<feature type="signal peptide" evidence="1">
    <location>
        <begin position="1"/>
        <end position="22"/>
    </location>
</feature>
<feature type="chain" id="PRO_1000083581" description="Protein YceI">
    <location>
        <begin position="23"/>
        <end position="191"/>
    </location>
</feature>
<protein>
    <recommendedName>
        <fullName evidence="1">Protein YceI</fullName>
    </recommendedName>
</protein>